<dbReference type="EC" id="2.4.1.-"/>
<dbReference type="EMBL" id="AF223643">
    <property type="protein sequence ID" value="AAF62896.1"/>
    <property type="molecule type" value="mRNA"/>
</dbReference>
<dbReference type="SMR" id="Q9M5Q1"/>
<dbReference type="CAZy" id="GT37">
    <property type="family name" value="Glycosyltransferase Family 37"/>
</dbReference>
<dbReference type="GlyCosmos" id="Q9M5Q1">
    <property type="glycosylation" value="4 sites, No reported glycans"/>
</dbReference>
<dbReference type="UniPathway" id="UPA00378"/>
<dbReference type="GO" id="GO:0032580">
    <property type="term" value="C:Golgi cisterna membrane"/>
    <property type="evidence" value="ECO:0007669"/>
    <property type="project" value="UniProtKB-SubCell"/>
</dbReference>
<dbReference type="GO" id="GO:0008107">
    <property type="term" value="F:galactoside 2-alpha-L-fucosyltransferase activity"/>
    <property type="evidence" value="ECO:0007669"/>
    <property type="project" value="InterPro"/>
</dbReference>
<dbReference type="GO" id="GO:0042546">
    <property type="term" value="P:cell wall biogenesis"/>
    <property type="evidence" value="ECO:0007669"/>
    <property type="project" value="InterPro"/>
</dbReference>
<dbReference type="GO" id="GO:0071555">
    <property type="term" value="P:cell wall organization"/>
    <property type="evidence" value="ECO:0007669"/>
    <property type="project" value="UniProtKB-KW"/>
</dbReference>
<dbReference type="GO" id="GO:0006486">
    <property type="term" value="P:protein glycosylation"/>
    <property type="evidence" value="ECO:0007669"/>
    <property type="project" value="UniProtKB-UniPathway"/>
</dbReference>
<dbReference type="GO" id="GO:0009969">
    <property type="term" value="P:xyloglucan biosynthetic process"/>
    <property type="evidence" value="ECO:0007669"/>
    <property type="project" value="TreeGrafter"/>
</dbReference>
<dbReference type="FunFam" id="3.40.50.11340:FF:000005">
    <property type="entry name" value="Galactoside 2-alpha-L-fucosyltransferase"/>
    <property type="match status" value="1"/>
</dbReference>
<dbReference type="Gene3D" id="3.40.50.11340">
    <property type="match status" value="1"/>
</dbReference>
<dbReference type="InterPro" id="IPR004938">
    <property type="entry name" value="XG_FTase"/>
</dbReference>
<dbReference type="PANTHER" id="PTHR31889">
    <property type="entry name" value="FUCOSYLTRANSFERASE 2-RELATED"/>
    <property type="match status" value="1"/>
</dbReference>
<dbReference type="PANTHER" id="PTHR31889:SF2">
    <property type="entry name" value="FUCOSYLTRANSFERASE 3"/>
    <property type="match status" value="1"/>
</dbReference>
<dbReference type="Pfam" id="PF03254">
    <property type="entry name" value="XG_FTase"/>
    <property type="match status" value="1"/>
</dbReference>
<accession>Q9M5Q1</accession>
<name>FUT1_PEA</name>
<proteinExistence type="evidence at transcript level"/>
<feature type="chain" id="PRO_0000193910" description="Galactoside 2-alpha-L-fucosyltransferase">
    <location>
        <begin position="1"/>
        <end position="565"/>
    </location>
</feature>
<feature type="topological domain" description="Cytoplasmic" evidence="2">
    <location>
        <begin position="1"/>
        <end position="43"/>
    </location>
</feature>
<feature type="transmembrane region" description="Helical; Signal-anchor for type II membrane protein" evidence="2">
    <location>
        <begin position="44"/>
        <end position="64"/>
    </location>
</feature>
<feature type="topological domain" description="Lumenal" evidence="2">
    <location>
        <begin position="65"/>
        <end position="565"/>
    </location>
</feature>
<feature type="glycosylation site" description="N-linked (GlcNAc...) asparagine" evidence="2">
    <location>
        <position position="159"/>
    </location>
</feature>
<feature type="glycosylation site" description="N-linked (GlcNAc...) asparagine" evidence="2">
    <location>
        <position position="263"/>
    </location>
</feature>
<feature type="glycosylation site" description="N-linked (GlcNAc...) asparagine" evidence="2">
    <location>
        <position position="407"/>
    </location>
</feature>
<feature type="glycosylation site" description="N-linked (GlcNAc...) asparagine" evidence="2">
    <location>
        <position position="509"/>
    </location>
</feature>
<organism>
    <name type="scientific">Pisum sativum</name>
    <name type="common">Garden pea</name>
    <name type="synonym">Lathyrus oleraceus</name>
    <dbReference type="NCBI Taxonomy" id="3888"/>
    <lineage>
        <taxon>Eukaryota</taxon>
        <taxon>Viridiplantae</taxon>
        <taxon>Streptophyta</taxon>
        <taxon>Embryophyta</taxon>
        <taxon>Tracheophyta</taxon>
        <taxon>Spermatophyta</taxon>
        <taxon>Magnoliopsida</taxon>
        <taxon>eudicotyledons</taxon>
        <taxon>Gunneridae</taxon>
        <taxon>Pentapetalae</taxon>
        <taxon>rosids</taxon>
        <taxon>fabids</taxon>
        <taxon>Fabales</taxon>
        <taxon>Fabaceae</taxon>
        <taxon>Papilionoideae</taxon>
        <taxon>50 kb inversion clade</taxon>
        <taxon>NPAAA clade</taxon>
        <taxon>Hologalegina</taxon>
        <taxon>IRL clade</taxon>
        <taxon>Fabeae</taxon>
        <taxon>Pisum</taxon>
    </lineage>
</organism>
<gene>
    <name type="primary">FT1</name>
</gene>
<comment type="function">
    <text evidence="3">Involved in cell wall biosynthesis. Adds the terminal fucosyl residue on xyloglucan side chains.</text>
</comment>
<comment type="pathway">
    <text>Protein modification; protein glycosylation.</text>
</comment>
<comment type="subcellular location">
    <subcellularLocation>
        <location evidence="1">Golgi apparatus</location>
        <location evidence="1">Golgi stack membrane</location>
        <topology evidence="1">Single-pass type II membrane protein</topology>
    </subcellularLocation>
    <text evidence="1">Membrane-bound form in trans cisternae of Golgi.</text>
</comment>
<comment type="similarity">
    <text evidence="4">Belongs to the glycosyltransferase 37 family.</text>
</comment>
<sequence>MNMLIKRVIAIKNPRGDDNNNNKLSDLETLTDKCTTCPLTLMRVMAFFVVSFMLFSVLFSLSVVLRDPPSDAAISSTTTLFQLNQGLGSDDFDSVELLNDKLLGGLLADGFDEKSCLSRYQSAIFGKGLSGKPSSYLISRLRKYEARHKQCGPYTESYNKTVKELGSGQFSESVDCKYVVWISFSGLGNRILTLVSAFLYALLTDRVLLVDPGVDMTDLFCEPFPDASWFVPPDFPLNSHLNNFNQESNQCHGKILKTKSITNSTVPSFVYLHLAHDYDDHDKLFFCDEEQLFLQNVPLLIMKTDNYFIPSLFLMPSFEQELNDLFPKKEKVFHFLGRYLLHPTNNVWGLVVRYYDAYLAKVDERIGIQIRVFDTDPGPFQHVLDQVLACTLKESILPDVNREQNINSSSGTPKSKAVLITSLSSGYFEKVRDMYWEFPTETGEVVGIYQPSHEGYQQTQKQFHNQKAWAEMYLLSLTDVLVTSSWSTFGYVAQGLGGLKPWILYKPENRTAPNPPCQRAMSMEPCFHAPPFYDCKAKRGTDTGALVPHVRHCEDMSWGLKLVDN</sequence>
<protein>
    <recommendedName>
        <fullName>Galactoside 2-alpha-L-fucosyltransferase</fullName>
        <ecNumber>2.4.1.-</ecNumber>
    </recommendedName>
    <alternativeName>
        <fullName>PsFT1</fullName>
    </alternativeName>
    <alternativeName>
        <fullName>Xyloglucan alpha-(1,2)-fucosyltransferase</fullName>
    </alternativeName>
</protein>
<reference key="1">
    <citation type="journal article" date="2000" name="J. Biol. Chem.">
        <title>Biochemical characterization and molecular cloning of an alpha-1,2-fucosyltransferase that catalyzes the last step of cell wall xyloglucan biosynthesis in Pea.</title>
        <authorList>
            <person name="Faik A."/>
            <person name="Bar-Peled M."/>
            <person name="DeRocher A.E."/>
            <person name="Zeng W."/>
            <person name="Perrin R.M."/>
            <person name="Wilkerson C."/>
            <person name="Raikhel N.V."/>
            <person name="Keegstra K."/>
        </authorList>
    </citation>
    <scope>NUCLEOTIDE SEQUENCE [MRNA]</scope>
    <scope>FUNCTION</scope>
    <source>
        <strain>cv. Alaska</strain>
    </source>
</reference>
<keyword id="KW-0961">Cell wall biogenesis/degradation</keyword>
<keyword id="KW-0325">Glycoprotein</keyword>
<keyword id="KW-0328">Glycosyltransferase</keyword>
<keyword id="KW-0333">Golgi apparatus</keyword>
<keyword id="KW-0472">Membrane</keyword>
<keyword id="KW-0735">Signal-anchor</keyword>
<keyword id="KW-0808">Transferase</keyword>
<keyword id="KW-0812">Transmembrane</keyword>
<keyword id="KW-1133">Transmembrane helix</keyword>
<evidence type="ECO:0000250" key="1"/>
<evidence type="ECO:0000255" key="2"/>
<evidence type="ECO:0000269" key="3">
    <source>
    </source>
</evidence>
<evidence type="ECO:0000305" key="4"/>